<name>VPC13_MYCTU</name>
<accession>P9WFA1</accession>
<accession>L0TAR6</accession>
<accession>P64901</accession>
<accession>P95168</accession>
<accession>Q50595</accession>
<keyword id="KW-0378">Hydrolase</keyword>
<keyword id="KW-0460">Magnesium</keyword>
<keyword id="KW-0479">Metal-binding</keyword>
<keyword id="KW-0540">Nuclease</keyword>
<keyword id="KW-1185">Reference proteome</keyword>
<keyword id="KW-0964">Secreted</keyword>
<keyword id="KW-1277">Toxin-antitoxin system</keyword>
<comment type="function">
    <text evidence="1">Toxic component of a type II toxin-antitoxin (TA) system. An RNase. The cognate antitoxin is VapB13 (By similarity).</text>
</comment>
<comment type="cofactor">
    <cofactor evidence="1">
        <name>Mg(2+)</name>
        <dbReference type="ChEBI" id="CHEBI:18420"/>
    </cofactor>
</comment>
<comment type="subcellular location">
    <subcellularLocation>
        <location>Secreted</location>
    </subcellularLocation>
    <text evidence="2">Following 6 weeks of nutrient starvation.</text>
</comment>
<comment type="similarity">
    <text evidence="1">Belongs to the PINc/VapC protein family.</text>
</comment>
<sequence length="131" mass="14726">MILVDSNIPMYLVGASHPHKLDAQRLLESALSGGERLVTDAEVLQEICHRYVAIKRREAIQPAFDAIIGVVDEVLPIERTDVEHARDALLRYQTLSARDALHIAVMAHHDITRLMSFDRGFDSYPGIKRLA</sequence>
<organism>
    <name type="scientific">Mycobacterium tuberculosis (strain ATCC 25618 / H37Rv)</name>
    <dbReference type="NCBI Taxonomy" id="83332"/>
    <lineage>
        <taxon>Bacteria</taxon>
        <taxon>Bacillati</taxon>
        <taxon>Actinomycetota</taxon>
        <taxon>Actinomycetes</taxon>
        <taxon>Mycobacteriales</taxon>
        <taxon>Mycobacteriaceae</taxon>
        <taxon>Mycobacterium</taxon>
        <taxon>Mycobacterium tuberculosis complex</taxon>
    </lineage>
</organism>
<protein>
    <recommendedName>
        <fullName evidence="1">Ribonuclease VapC13</fullName>
        <shortName evidence="1">RNase VapC13</shortName>
        <ecNumber evidence="1">3.1.-.-</ecNumber>
    </recommendedName>
    <alternativeName>
        <fullName evidence="1">Toxin VapC13</fullName>
    </alternativeName>
</protein>
<gene>
    <name evidence="1" type="primary">vapC13</name>
    <name type="ordered locus">Rv1838c</name>
    <name type="ORF">MTCY1A11.05</name>
    <name type="ORF">MTCY359.35</name>
</gene>
<evidence type="ECO:0000255" key="1">
    <source>
        <dbReference type="HAMAP-Rule" id="MF_00265"/>
    </source>
</evidence>
<evidence type="ECO:0000269" key="2">
    <source>
    </source>
</evidence>
<feature type="chain" id="PRO_0000103911" description="Ribonuclease VapC13">
    <location>
        <begin position="1"/>
        <end position="131"/>
    </location>
</feature>
<feature type="domain" description="PINc" evidence="1">
    <location>
        <begin position="2"/>
        <end position="128"/>
    </location>
</feature>
<feature type="binding site" evidence="1">
    <location>
        <position position="5"/>
    </location>
    <ligand>
        <name>Mg(2+)</name>
        <dbReference type="ChEBI" id="CHEBI:18420"/>
    </ligand>
</feature>
<feature type="binding site" evidence="1">
    <location>
        <position position="99"/>
    </location>
    <ligand>
        <name>Mg(2+)</name>
        <dbReference type="ChEBI" id="CHEBI:18420"/>
    </ligand>
</feature>
<proteinExistence type="evidence at protein level"/>
<reference key="1">
    <citation type="journal article" date="1998" name="Nature">
        <title>Deciphering the biology of Mycobacterium tuberculosis from the complete genome sequence.</title>
        <authorList>
            <person name="Cole S.T."/>
            <person name="Brosch R."/>
            <person name="Parkhill J."/>
            <person name="Garnier T."/>
            <person name="Churcher C.M."/>
            <person name="Harris D.E."/>
            <person name="Gordon S.V."/>
            <person name="Eiglmeier K."/>
            <person name="Gas S."/>
            <person name="Barry C.E. III"/>
            <person name="Tekaia F."/>
            <person name="Badcock K."/>
            <person name="Basham D."/>
            <person name="Brown D."/>
            <person name="Chillingworth T."/>
            <person name="Connor R."/>
            <person name="Davies R.M."/>
            <person name="Devlin K."/>
            <person name="Feltwell T."/>
            <person name="Gentles S."/>
            <person name="Hamlin N."/>
            <person name="Holroyd S."/>
            <person name="Hornsby T."/>
            <person name="Jagels K."/>
            <person name="Krogh A."/>
            <person name="McLean J."/>
            <person name="Moule S."/>
            <person name="Murphy L.D."/>
            <person name="Oliver S."/>
            <person name="Osborne J."/>
            <person name="Quail M.A."/>
            <person name="Rajandream M.A."/>
            <person name="Rogers J."/>
            <person name="Rutter S."/>
            <person name="Seeger K."/>
            <person name="Skelton S."/>
            <person name="Squares S."/>
            <person name="Squares R."/>
            <person name="Sulston J.E."/>
            <person name="Taylor K."/>
            <person name="Whitehead S."/>
            <person name="Barrell B.G."/>
        </authorList>
    </citation>
    <scope>NUCLEOTIDE SEQUENCE [LARGE SCALE GENOMIC DNA]</scope>
    <source>
        <strain>ATCC 25618 / H37Rv</strain>
    </source>
</reference>
<reference key="2">
    <citation type="journal article" date="2005" name="Nucleic Acids Res.">
        <title>Toxin-antitoxin loci are highly abundant in free-living but lost from host-associated prokaryotes.</title>
        <authorList>
            <person name="Pandey D.P."/>
            <person name="Gerdes K."/>
        </authorList>
    </citation>
    <scope>POSSIBLE FUNCTION</scope>
    <source>
        <strain>ATCC 25618 / H37Rv</strain>
    </source>
</reference>
<reference key="3">
    <citation type="journal article" date="2011" name="Mol. Cell. Proteomics">
        <title>Proteogenomic analysis of Mycobacterium tuberculosis by high resolution mass spectrometry.</title>
        <authorList>
            <person name="Kelkar D.S."/>
            <person name="Kumar D."/>
            <person name="Kumar P."/>
            <person name="Balakrishnan L."/>
            <person name="Muthusamy B."/>
            <person name="Yadav A.K."/>
            <person name="Shrivastava P."/>
            <person name="Marimuthu A."/>
            <person name="Anand S."/>
            <person name="Sundaram H."/>
            <person name="Kingsbury R."/>
            <person name="Harsha H.C."/>
            <person name="Nair B."/>
            <person name="Prasad T.S."/>
            <person name="Chauhan D.S."/>
            <person name="Katoch K."/>
            <person name="Katoch V.M."/>
            <person name="Kumar P."/>
            <person name="Chaerkady R."/>
            <person name="Ramachandran S."/>
            <person name="Dash D."/>
            <person name="Pandey A."/>
        </authorList>
    </citation>
    <scope>IDENTIFICATION BY MASS SPECTROMETRY [LARGE SCALE ANALYSIS]</scope>
    <source>
        <strain>ATCC 25618 / H37Rv</strain>
    </source>
</reference>
<reference key="4">
    <citation type="journal article" date="2013" name="Mol. Cell. Proteomics">
        <title>Proteomic profiling of Mycobacterium tuberculosis identifies nutrient-starvation-responsive toxin-antitoxin systems.</title>
        <authorList>
            <person name="Albrethsen J."/>
            <person name="Agner J."/>
            <person name="Piersma S.R."/>
            <person name="Hoejrup P."/>
            <person name="Pham T.V."/>
            <person name="Weldingh K."/>
            <person name="Jimenez C.R."/>
            <person name="Andersen P."/>
            <person name="Rosenkrands I."/>
        </authorList>
    </citation>
    <scope>IDENTIFICATION BY MASS SPECTROMETRY</scope>
    <scope>SUBCELLULAR LOCATION</scope>
    <source>
        <strain>ATCC 27294 / TMC 102 / H37Rv</strain>
    </source>
</reference>
<dbReference type="EC" id="3.1.-.-" evidence="1"/>
<dbReference type="EMBL" id="AL123456">
    <property type="protein sequence ID" value="CCP44604.1"/>
    <property type="molecule type" value="Genomic_DNA"/>
</dbReference>
<dbReference type="PIR" id="F70663">
    <property type="entry name" value="F70663"/>
</dbReference>
<dbReference type="RefSeq" id="NP_216354.1">
    <property type="nucleotide sequence ID" value="NC_000962.3"/>
</dbReference>
<dbReference type="RefSeq" id="WP_003409273.1">
    <property type="nucleotide sequence ID" value="NZ_NVQJ01000013.1"/>
</dbReference>
<dbReference type="SMR" id="P9WFA1"/>
<dbReference type="STRING" id="83332.Rv1838c"/>
<dbReference type="PaxDb" id="83332-Rv1838c"/>
<dbReference type="DNASU" id="885744"/>
<dbReference type="GeneID" id="885744"/>
<dbReference type="KEGG" id="mtu:Rv1838c"/>
<dbReference type="KEGG" id="mtv:RVBD_1838c"/>
<dbReference type="TubercuList" id="Rv1838c"/>
<dbReference type="eggNOG" id="COG1848">
    <property type="taxonomic scope" value="Bacteria"/>
</dbReference>
<dbReference type="InParanoid" id="P9WFA1"/>
<dbReference type="OrthoDB" id="4726629at2"/>
<dbReference type="PhylomeDB" id="P9WFA1"/>
<dbReference type="Proteomes" id="UP000001584">
    <property type="component" value="Chromosome"/>
</dbReference>
<dbReference type="GO" id="GO:0005576">
    <property type="term" value="C:extracellular region"/>
    <property type="evidence" value="ECO:0007669"/>
    <property type="project" value="UniProtKB-SubCell"/>
</dbReference>
<dbReference type="GO" id="GO:0000287">
    <property type="term" value="F:magnesium ion binding"/>
    <property type="evidence" value="ECO:0007669"/>
    <property type="project" value="UniProtKB-UniRule"/>
</dbReference>
<dbReference type="GO" id="GO:0004540">
    <property type="term" value="F:RNA nuclease activity"/>
    <property type="evidence" value="ECO:0007669"/>
    <property type="project" value="InterPro"/>
</dbReference>
<dbReference type="CDD" id="cd09854">
    <property type="entry name" value="PIN_VapC-like"/>
    <property type="match status" value="1"/>
</dbReference>
<dbReference type="Gene3D" id="3.40.50.1010">
    <property type="entry name" value="5'-nuclease"/>
    <property type="match status" value="1"/>
</dbReference>
<dbReference type="HAMAP" id="MF_00265">
    <property type="entry name" value="VapC_Nob1"/>
    <property type="match status" value="1"/>
</dbReference>
<dbReference type="InterPro" id="IPR029060">
    <property type="entry name" value="PIN-like_dom_sf"/>
</dbReference>
<dbReference type="InterPro" id="IPR002716">
    <property type="entry name" value="PIN_dom"/>
</dbReference>
<dbReference type="InterPro" id="IPR052106">
    <property type="entry name" value="PINc/VapC_TA"/>
</dbReference>
<dbReference type="InterPro" id="IPR022907">
    <property type="entry name" value="VapC_family"/>
</dbReference>
<dbReference type="PANTHER" id="PTHR38826">
    <property type="entry name" value="RIBONUCLEASE VAPC13"/>
    <property type="match status" value="1"/>
</dbReference>
<dbReference type="PANTHER" id="PTHR38826:SF5">
    <property type="entry name" value="RIBONUCLEASE VAPC13"/>
    <property type="match status" value="1"/>
</dbReference>
<dbReference type="Pfam" id="PF01850">
    <property type="entry name" value="PIN"/>
    <property type="match status" value="1"/>
</dbReference>
<dbReference type="SUPFAM" id="SSF88723">
    <property type="entry name" value="PIN domain-like"/>
    <property type="match status" value="1"/>
</dbReference>